<protein>
    <recommendedName>
        <fullName>Ribosomal large subunit pseudouridine synthase C</fullName>
        <ecNumber>5.4.99.24</ecNumber>
    </recommendedName>
    <alternativeName>
        <fullName>23S rRNA pseudouridine(955/2504/2580) synthase</fullName>
    </alternativeName>
    <alternativeName>
        <fullName>rRNA pseudouridylate synthase C</fullName>
    </alternativeName>
    <alternativeName>
        <fullName>rRNA-uridine isomerase C</fullName>
    </alternativeName>
</protein>
<keyword id="KW-0413">Isomerase</keyword>
<keyword id="KW-1185">Reference proteome</keyword>
<keyword id="KW-0694">RNA-binding</keyword>
<keyword id="KW-0698">rRNA processing</keyword>
<gene>
    <name type="primary">rluC</name>
    <name type="ordered locus">bbp_318</name>
</gene>
<organism>
    <name type="scientific">Buchnera aphidicola subsp. Baizongia pistaciae (strain Bp)</name>
    <dbReference type="NCBI Taxonomy" id="224915"/>
    <lineage>
        <taxon>Bacteria</taxon>
        <taxon>Pseudomonadati</taxon>
        <taxon>Pseudomonadota</taxon>
        <taxon>Gammaproteobacteria</taxon>
        <taxon>Enterobacterales</taxon>
        <taxon>Erwiniaceae</taxon>
        <taxon>Buchnera</taxon>
    </lineage>
</organism>
<comment type="function">
    <text evidence="1">Responsible for synthesis of pseudouridine from uracil at positions 955, 2504 and 2580 in 23S ribosomal RNA.</text>
</comment>
<comment type="catalytic activity">
    <reaction>
        <text>uridine(955/2504/2580) in 23S rRNA = pseudouridine(955/2504/2580) in 23S rRNA</text>
        <dbReference type="Rhea" id="RHEA:42528"/>
        <dbReference type="Rhea" id="RHEA-COMP:10099"/>
        <dbReference type="Rhea" id="RHEA-COMP:10100"/>
        <dbReference type="ChEBI" id="CHEBI:65314"/>
        <dbReference type="ChEBI" id="CHEBI:65315"/>
        <dbReference type="EC" id="5.4.99.24"/>
    </reaction>
</comment>
<comment type="similarity">
    <text evidence="3">Belongs to the pseudouridine synthase RluA family.</text>
</comment>
<accession>Q89AH2</accession>
<dbReference type="EC" id="5.4.99.24"/>
<dbReference type="EMBL" id="AE016826">
    <property type="protein sequence ID" value="AAO27040.1"/>
    <property type="molecule type" value="Genomic_DNA"/>
</dbReference>
<dbReference type="RefSeq" id="WP_011091441.1">
    <property type="nucleotide sequence ID" value="NC_004545.1"/>
</dbReference>
<dbReference type="SMR" id="Q89AH2"/>
<dbReference type="STRING" id="224915.bbp_318"/>
<dbReference type="KEGG" id="bab:bbp_318"/>
<dbReference type="eggNOG" id="COG0564">
    <property type="taxonomic scope" value="Bacteria"/>
</dbReference>
<dbReference type="HOGENOM" id="CLU_016902_1_1_6"/>
<dbReference type="OrthoDB" id="9807829at2"/>
<dbReference type="Proteomes" id="UP000000601">
    <property type="component" value="Chromosome"/>
</dbReference>
<dbReference type="GO" id="GO:0160141">
    <property type="term" value="F:23S rRNA pseudouridine(955/2504/2580) synthase activity"/>
    <property type="evidence" value="ECO:0007669"/>
    <property type="project" value="UniProtKB-EC"/>
</dbReference>
<dbReference type="GO" id="GO:0003723">
    <property type="term" value="F:RNA binding"/>
    <property type="evidence" value="ECO:0007669"/>
    <property type="project" value="UniProtKB-KW"/>
</dbReference>
<dbReference type="GO" id="GO:0000455">
    <property type="term" value="P:enzyme-directed rRNA pseudouridine synthesis"/>
    <property type="evidence" value="ECO:0007669"/>
    <property type="project" value="TreeGrafter"/>
</dbReference>
<dbReference type="CDD" id="cd02869">
    <property type="entry name" value="PseudoU_synth_RluA_like"/>
    <property type="match status" value="1"/>
</dbReference>
<dbReference type="Gene3D" id="3.30.2350.10">
    <property type="entry name" value="Pseudouridine synthase"/>
    <property type="match status" value="1"/>
</dbReference>
<dbReference type="Gene3D" id="3.10.290.10">
    <property type="entry name" value="RNA-binding S4 domain"/>
    <property type="match status" value="1"/>
</dbReference>
<dbReference type="InterPro" id="IPR020103">
    <property type="entry name" value="PsdUridine_synth_cat_dom_sf"/>
</dbReference>
<dbReference type="InterPro" id="IPR006224">
    <property type="entry name" value="PsdUridine_synth_RluA-like_CS"/>
</dbReference>
<dbReference type="InterPro" id="IPR006225">
    <property type="entry name" value="PsdUridine_synth_RluC/D"/>
</dbReference>
<dbReference type="InterPro" id="IPR006145">
    <property type="entry name" value="PsdUridine_synth_RsuA/RluA"/>
</dbReference>
<dbReference type="InterPro" id="IPR050188">
    <property type="entry name" value="RluA_PseudoU_synthase"/>
</dbReference>
<dbReference type="InterPro" id="IPR036986">
    <property type="entry name" value="S4_RNA-bd_sf"/>
</dbReference>
<dbReference type="NCBIfam" id="TIGR00005">
    <property type="entry name" value="rluA_subfam"/>
    <property type="match status" value="1"/>
</dbReference>
<dbReference type="PANTHER" id="PTHR21600">
    <property type="entry name" value="MITOCHONDRIAL RNA PSEUDOURIDINE SYNTHASE"/>
    <property type="match status" value="1"/>
</dbReference>
<dbReference type="PANTHER" id="PTHR21600:SF92">
    <property type="entry name" value="RIBOSOMAL LARGE SUBUNIT PSEUDOURIDINE SYNTHASE C"/>
    <property type="match status" value="1"/>
</dbReference>
<dbReference type="Pfam" id="PF00849">
    <property type="entry name" value="PseudoU_synth_2"/>
    <property type="match status" value="1"/>
</dbReference>
<dbReference type="SUPFAM" id="SSF55174">
    <property type="entry name" value="Alpha-L RNA-binding motif"/>
    <property type="match status" value="1"/>
</dbReference>
<dbReference type="SUPFAM" id="SSF55120">
    <property type="entry name" value="Pseudouridine synthase"/>
    <property type="match status" value="1"/>
</dbReference>
<dbReference type="PROSITE" id="PS01129">
    <property type="entry name" value="PSI_RLU"/>
    <property type="match status" value="1"/>
</dbReference>
<dbReference type="PROSITE" id="PS50889">
    <property type="entry name" value="S4"/>
    <property type="match status" value="1"/>
</dbReference>
<reference key="1">
    <citation type="journal article" date="2003" name="Proc. Natl. Acad. Sci. U.S.A.">
        <title>Reductive genome evolution in Buchnera aphidicola.</title>
        <authorList>
            <person name="van Ham R.C.H.J."/>
            <person name="Kamerbeek J."/>
            <person name="Palacios C."/>
            <person name="Rausell C."/>
            <person name="Abascal F."/>
            <person name="Bastolla U."/>
            <person name="Fernandez J.M."/>
            <person name="Jimenez L."/>
            <person name="Postigo M."/>
            <person name="Silva F.J."/>
            <person name="Tamames J."/>
            <person name="Viguera E."/>
            <person name="Latorre A."/>
            <person name="Valencia A."/>
            <person name="Moran F."/>
            <person name="Moya A."/>
        </authorList>
    </citation>
    <scope>NUCLEOTIDE SEQUENCE [LARGE SCALE GENOMIC DNA]</scope>
    <source>
        <strain>Bp</strain>
    </source>
</reference>
<feature type="chain" id="PRO_0000162666" description="Ribosomal large subunit pseudouridine synthase C">
    <location>
        <begin position="1"/>
        <end position="315"/>
    </location>
</feature>
<feature type="domain" description="S4 RNA-binding" evidence="2">
    <location>
        <begin position="20"/>
        <end position="90"/>
    </location>
</feature>
<feature type="active site" evidence="1">
    <location>
        <position position="144"/>
    </location>
</feature>
<proteinExistence type="inferred from homology"/>
<evidence type="ECO:0000250" key="1"/>
<evidence type="ECO:0000255" key="2">
    <source>
        <dbReference type="PROSITE-ProRule" id="PRU00182"/>
    </source>
</evidence>
<evidence type="ECO:0000305" key="3"/>
<name>RLUC_BUCBP</name>
<sequence>MTNQFSSTHFLNITENSEKQRIDNFLRKTFKRLPFNLICKIIRTGQIRINKKRINQNYKLKLGDSVRIPPITIQSDSNKKIKLNTRLSIIFNNMILYEDNYFLILNKPSGMSVHSGSGINYGMIENLRILRPYNRYLDLVHRLDRDTSGVLIIAKKRSILRNLHEQLREKKIKKKYVALVHGVWPDILKSISKPLLKTSSRKNKNIVKIDPKGKESITHFNIKKKYTKNTLISITPITGRTHQIRVHLLHLNYPIVLDAKYGIKKLDYFIKNKFNINRLLLHAESINFFHPKRKKNILITAPLDYVFKTVLKNLI</sequence>